<organism>
    <name type="scientific">Streptococcus pyogenes serotype M12 (strain MGAS2096)</name>
    <dbReference type="NCBI Taxonomy" id="370553"/>
    <lineage>
        <taxon>Bacteria</taxon>
        <taxon>Bacillati</taxon>
        <taxon>Bacillota</taxon>
        <taxon>Bacilli</taxon>
        <taxon>Lactobacillales</taxon>
        <taxon>Streptococcaceae</taxon>
        <taxon>Streptococcus</taxon>
    </lineage>
</organism>
<feature type="chain" id="PRO_1000128607" description="Small ribosomal subunit protein uS14">
    <location>
        <begin position="1"/>
        <end position="89"/>
    </location>
</feature>
<feature type="region of interest" description="Disordered" evidence="2">
    <location>
        <begin position="34"/>
        <end position="54"/>
    </location>
</feature>
<accession>Q1J9Z4</accession>
<sequence length="89" mass="10454">MAKKSKIAKYQKQLQLIEQYADLRRDLKAKGDYESLRKLPRDSNPNRLKNRDKIDGRPHAYMRKFGVSRINFRDLAHKGQLPGVTKASW</sequence>
<comment type="function">
    <text evidence="1">Binds 16S rRNA, required for the assembly of 30S particles and may also be responsible for determining the conformation of the 16S rRNA at the A site.</text>
</comment>
<comment type="subunit">
    <text evidence="1">Part of the 30S ribosomal subunit. Contacts proteins S3 and S10.</text>
</comment>
<comment type="similarity">
    <text evidence="1">Belongs to the universal ribosomal protein uS14 family.</text>
</comment>
<name>RS14_STRPB</name>
<reference key="1">
    <citation type="journal article" date="2006" name="Proc. Natl. Acad. Sci. U.S.A.">
        <title>Molecular genetic anatomy of inter- and intraserotype variation in the human bacterial pathogen group A Streptococcus.</title>
        <authorList>
            <person name="Beres S.B."/>
            <person name="Richter E.W."/>
            <person name="Nagiec M.J."/>
            <person name="Sumby P."/>
            <person name="Porcella S.F."/>
            <person name="DeLeo F.R."/>
            <person name="Musser J.M."/>
        </authorList>
    </citation>
    <scope>NUCLEOTIDE SEQUENCE [LARGE SCALE GENOMIC DNA]</scope>
    <source>
        <strain>MGAS2096</strain>
    </source>
</reference>
<dbReference type="EMBL" id="CP000261">
    <property type="protein sequence ID" value="ABF36667.1"/>
    <property type="molecule type" value="Genomic_DNA"/>
</dbReference>
<dbReference type="SMR" id="Q1J9Z4"/>
<dbReference type="KEGG" id="spj:MGAS2096_Spy1615"/>
<dbReference type="HOGENOM" id="CLU_139869_0_0_9"/>
<dbReference type="GO" id="GO:0005737">
    <property type="term" value="C:cytoplasm"/>
    <property type="evidence" value="ECO:0007669"/>
    <property type="project" value="UniProtKB-ARBA"/>
</dbReference>
<dbReference type="GO" id="GO:0015935">
    <property type="term" value="C:small ribosomal subunit"/>
    <property type="evidence" value="ECO:0007669"/>
    <property type="project" value="TreeGrafter"/>
</dbReference>
<dbReference type="GO" id="GO:0019843">
    <property type="term" value="F:rRNA binding"/>
    <property type="evidence" value="ECO:0007669"/>
    <property type="project" value="UniProtKB-UniRule"/>
</dbReference>
<dbReference type="GO" id="GO:0003735">
    <property type="term" value="F:structural constituent of ribosome"/>
    <property type="evidence" value="ECO:0007669"/>
    <property type="project" value="InterPro"/>
</dbReference>
<dbReference type="GO" id="GO:0006412">
    <property type="term" value="P:translation"/>
    <property type="evidence" value="ECO:0007669"/>
    <property type="project" value="UniProtKB-UniRule"/>
</dbReference>
<dbReference type="Gene3D" id="4.10.830.10">
    <property type="entry name" value="30s Ribosomal Protein S14, Chain N"/>
    <property type="match status" value="1"/>
</dbReference>
<dbReference type="HAMAP" id="MF_00537">
    <property type="entry name" value="Ribosomal_uS14_1"/>
    <property type="match status" value="1"/>
</dbReference>
<dbReference type="InterPro" id="IPR001209">
    <property type="entry name" value="Ribosomal_uS14"/>
</dbReference>
<dbReference type="InterPro" id="IPR023036">
    <property type="entry name" value="Ribosomal_uS14_bac/plastid"/>
</dbReference>
<dbReference type="InterPro" id="IPR043140">
    <property type="entry name" value="Ribosomal_uS14_sf"/>
</dbReference>
<dbReference type="NCBIfam" id="NF006477">
    <property type="entry name" value="PRK08881.1"/>
    <property type="match status" value="1"/>
</dbReference>
<dbReference type="PANTHER" id="PTHR19836">
    <property type="entry name" value="30S RIBOSOMAL PROTEIN S14"/>
    <property type="match status" value="1"/>
</dbReference>
<dbReference type="PANTHER" id="PTHR19836:SF19">
    <property type="entry name" value="SMALL RIBOSOMAL SUBUNIT PROTEIN US14M"/>
    <property type="match status" value="1"/>
</dbReference>
<dbReference type="Pfam" id="PF00253">
    <property type="entry name" value="Ribosomal_S14"/>
    <property type="match status" value="1"/>
</dbReference>
<dbReference type="SUPFAM" id="SSF57716">
    <property type="entry name" value="Glucocorticoid receptor-like (DNA-binding domain)"/>
    <property type="match status" value="1"/>
</dbReference>
<protein>
    <recommendedName>
        <fullName evidence="1">Small ribosomal subunit protein uS14</fullName>
    </recommendedName>
    <alternativeName>
        <fullName evidence="3">30S ribosomal protein S14</fullName>
    </alternativeName>
</protein>
<gene>
    <name evidence="1" type="primary">rpsN</name>
    <name type="ordered locus">MGAS2096_Spy1615</name>
</gene>
<evidence type="ECO:0000255" key="1">
    <source>
        <dbReference type="HAMAP-Rule" id="MF_00537"/>
    </source>
</evidence>
<evidence type="ECO:0000256" key="2">
    <source>
        <dbReference type="SAM" id="MobiDB-lite"/>
    </source>
</evidence>
<evidence type="ECO:0000305" key="3"/>
<proteinExistence type="inferred from homology"/>
<keyword id="KW-0687">Ribonucleoprotein</keyword>
<keyword id="KW-0689">Ribosomal protein</keyword>
<keyword id="KW-0694">RNA-binding</keyword>
<keyword id="KW-0699">rRNA-binding</keyword>